<name>Y103_LEGPA</name>
<sequence>MTIWVDADACPKMIKDILFRAAIRTNTNLILVANSYLTYPNSPFIRSVLVEKGYDRADHYITSHMKAKDLVITADIPLAAEVIVKQGLAMSPRGELFTANNIKQRLTLRDINEQLRSAGERTGGPSALSAREKTNFANALDRWLAKSK</sequence>
<organism>
    <name type="scientific">Legionella pneumophila (strain Paris)</name>
    <dbReference type="NCBI Taxonomy" id="297246"/>
    <lineage>
        <taxon>Bacteria</taxon>
        <taxon>Pseudomonadati</taxon>
        <taxon>Pseudomonadota</taxon>
        <taxon>Gammaproteobacteria</taxon>
        <taxon>Legionellales</taxon>
        <taxon>Legionellaceae</taxon>
        <taxon>Legionella</taxon>
    </lineage>
</organism>
<evidence type="ECO:0000255" key="1">
    <source>
        <dbReference type="HAMAP-Rule" id="MF_00489"/>
    </source>
</evidence>
<reference key="1">
    <citation type="journal article" date="2004" name="Nat. Genet.">
        <title>Evidence in the Legionella pneumophila genome for exploitation of host cell functions and high genome plasticity.</title>
        <authorList>
            <person name="Cazalet C."/>
            <person name="Rusniok C."/>
            <person name="Brueggemann H."/>
            <person name="Zidane N."/>
            <person name="Magnier A."/>
            <person name="Ma L."/>
            <person name="Tichit M."/>
            <person name="Jarraud S."/>
            <person name="Bouchier C."/>
            <person name="Vandenesch F."/>
            <person name="Kunst F."/>
            <person name="Etienne J."/>
            <person name="Glaser P."/>
            <person name="Buchrieser C."/>
        </authorList>
    </citation>
    <scope>NUCLEOTIDE SEQUENCE [LARGE SCALE GENOMIC DNA]</scope>
    <source>
        <strain>Paris</strain>
    </source>
</reference>
<feature type="chain" id="PRO_0000175986" description="UPF0178 protein lpp0103">
    <location>
        <begin position="1"/>
        <end position="148"/>
    </location>
</feature>
<proteinExistence type="inferred from homology"/>
<comment type="similarity">
    <text evidence="1">Belongs to the UPF0178 family.</text>
</comment>
<gene>
    <name type="ordered locus">lpp0103</name>
</gene>
<dbReference type="EMBL" id="CR628336">
    <property type="protein sequence ID" value="CAH11251.1"/>
    <property type="molecule type" value="Genomic_DNA"/>
</dbReference>
<dbReference type="RefSeq" id="WP_011212745.1">
    <property type="nucleotide sequence ID" value="NC_006368.1"/>
</dbReference>
<dbReference type="KEGG" id="lpp:lpp0103"/>
<dbReference type="LegioList" id="lpp0103"/>
<dbReference type="HOGENOM" id="CLU_106619_2_1_6"/>
<dbReference type="CDD" id="cd18720">
    <property type="entry name" value="PIN_YqxD-like"/>
    <property type="match status" value="1"/>
</dbReference>
<dbReference type="HAMAP" id="MF_00489">
    <property type="entry name" value="UPF0178"/>
    <property type="match status" value="1"/>
</dbReference>
<dbReference type="InterPro" id="IPR003791">
    <property type="entry name" value="UPF0178"/>
</dbReference>
<dbReference type="NCBIfam" id="NF001095">
    <property type="entry name" value="PRK00124.1"/>
    <property type="match status" value="1"/>
</dbReference>
<dbReference type="PANTHER" id="PTHR35146">
    <property type="entry name" value="UPF0178 PROTEIN YAII"/>
    <property type="match status" value="1"/>
</dbReference>
<dbReference type="PANTHER" id="PTHR35146:SF1">
    <property type="entry name" value="UPF0178 PROTEIN YAII"/>
    <property type="match status" value="1"/>
</dbReference>
<dbReference type="Pfam" id="PF02639">
    <property type="entry name" value="DUF188"/>
    <property type="match status" value="1"/>
</dbReference>
<protein>
    <recommendedName>
        <fullName evidence="1">UPF0178 protein lpp0103</fullName>
    </recommendedName>
</protein>
<accession>Q5X8Y9</accession>